<comment type="function">
    <text evidence="1">Catalyzes the attachment of valine to tRNA(Val). As ValRS can inadvertently accommodate and process structurally similar amino acids such as threonine, to avoid such errors, it has a 'posttransfer' editing activity that hydrolyzes mischarged Thr-tRNA(Val) in a tRNA-dependent manner.</text>
</comment>
<comment type="catalytic activity">
    <reaction evidence="1">
        <text>tRNA(Val) + L-valine + ATP = L-valyl-tRNA(Val) + AMP + diphosphate</text>
        <dbReference type="Rhea" id="RHEA:10704"/>
        <dbReference type="Rhea" id="RHEA-COMP:9672"/>
        <dbReference type="Rhea" id="RHEA-COMP:9708"/>
        <dbReference type="ChEBI" id="CHEBI:30616"/>
        <dbReference type="ChEBI" id="CHEBI:33019"/>
        <dbReference type="ChEBI" id="CHEBI:57762"/>
        <dbReference type="ChEBI" id="CHEBI:78442"/>
        <dbReference type="ChEBI" id="CHEBI:78537"/>
        <dbReference type="ChEBI" id="CHEBI:456215"/>
        <dbReference type="EC" id="6.1.1.9"/>
    </reaction>
</comment>
<comment type="subunit">
    <text evidence="1">Monomer.</text>
</comment>
<comment type="subcellular location">
    <subcellularLocation>
        <location evidence="1">Cytoplasm</location>
    </subcellularLocation>
</comment>
<comment type="domain">
    <text evidence="1">ValRS has two distinct active sites: one for aminoacylation and one for editing. The misactivated threonine is translocated from the active site to the editing site.</text>
</comment>
<comment type="domain">
    <text evidence="1">The C-terminal coiled-coil domain is crucial for aminoacylation activity.</text>
</comment>
<comment type="similarity">
    <text evidence="1">Belongs to the class-I aminoacyl-tRNA synthetase family. ValS type 1 subfamily.</text>
</comment>
<feature type="chain" id="PRO_0000224558" description="Valine--tRNA ligase">
    <location>
        <begin position="1"/>
        <end position="1020"/>
    </location>
</feature>
<feature type="coiled-coil region" evidence="1">
    <location>
        <begin position="955"/>
        <end position="1020"/>
    </location>
</feature>
<feature type="short sequence motif" description="'HIGH' region">
    <location>
        <begin position="45"/>
        <end position="55"/>
    </location>
</feature>
<feature type="short sequence motif" description="'KMSKS' region">
    <location>
        <begin position="661"/>
        <end position="665"/>
    </location>
</feature>
<feature type="binding site" evidence="1">
    <location>
        <position position="664"/>
    </location>
    <ligand>
        <name>ATP</name>
        <dbReference type="ChEBI" id="CHEBI:30616"/>
    </ligand>
</feature>
<protein>
    <recommendedName>
        <fullName evidence="1">Valine--tRNA ligase</fullName>
        <ecNumber evidence="1">6.1.1.9</ecNumber>
    </recommendedName>
    <alternativeName>
        <fullName evidence="1">Valyl-tRNA synthetase</fullName>
        <shortName evidence="1">ValRS</shortName>
    </alternativeName>
</protein>
<keyword id="KW-0030">Aminoacyl-tRNA synthetase</keyword>
<keyword id="KW-0067">ATP-binding</keyword>
<keyword id="KW-0175">Coiled coil</keyword>
<keyword id="KW-0963">Cytoplasm</keyword>
<keyword id="KW-0436">Ligase</keyword>
<keyword id="KW-0547">Nucleotide-binding</keyword>
<keyword id="KW-0648">Protein biosynthesis</keyword>
<keyword id="KW-1185">Reference proteome</keyword>
<gene>
    <name evidence="1" type="primary">valS</name>
    <name type="ordered locus">SPO3022</name>
</gene>
<sequence length="1020" mass="113543">MAMEKTFDAAEAEARITKAWEEAGAFKAGANRSRDESFTIMIPPPNVTGALHVGHAFNNTLQDILTRWHRMRGFDTLWQPGQDHAGIATQMQVEKMLAATQQPSRRELGREEFLKKVWEWKGQYGGTIVEQLKRLGASCDWSRNAFTMAGAAGDPRTGHENSPNFHDAVIKVFVDMYNKGLIYRGKRLVNWDPHFETAISDLEVENIEVAGHMWHFKYPLAGGATYTYVEKDEDGNIVLEEERDYISIATTRPETMLGDGAVAVHPSDERYAPIVGKLCEIPVGPKEHRRQIPIITDEYPDKNFGSGAVKITGAHDFNDYAVAKRGGIPLYRLMDTRGQMRADGAPYAAEAGKAQDYARGRAFTENEIDVINLVPDHLRGLDRFEARAKVVDEITSEGLAVMTVASDPRLGTTALKPGAEGADAIVPLVEAKPIMQPFGDRSKVVIEPMLTDQWFVDAEKVVGPALDAVRDGTVKIIPESGEKTYYHWLENIEPWCISRQLWWGHQIPVWYGPNRDDLGASYKAFCAASEQDALLLAQNYYGANVEVDFDSGPEELSGGIAFGTIEGPGGQKTLQSVSLTRDPDVLDTWFSSGLWPIGTLGWPEDTDEMRRYFPTSVLITGFDILFFWVARMMMMQLAVVDQVPFHTVYLHQLVRDEKGKKMSKTTGNVIDPLEIVDEFGADALRFTNASMAAIGGVLKLSKERITGYRNFTTKLWNAIRFAEMNEVFTDAVPQLSAAELAPKAAVNRWIIGETARVREEVDAALDSYRFNDAANALYAFVWGKVCDWYVELSKPLLQGEDTEAQAETRATMRWVMDQCLVLLHPIMPFITEELWGLTAERAKMLVHADWPTYKAADLVDDAADREMNWVISVIENTRSARAQMRVPAGLYVPMIVTEIDDHGQAAWDRNEALIKRLARIDSLTKADAMPKGCISIAAPGAAFGLPLAEIIDIGAEKDRLEKAKGKLAKELGGLRGRLNNPKFVESAPDEVVEEARENLAAREEEEARLNEALARLAELG</sequence>
<evidence type="ECO:0000255" key="1">
    <source>
        <dbReference type="HAMAP-Rule" id="MF_02004"/>
    </source>
</evidence>
<name>SYV_RUEPO</name>
<accession>Q5LP30</accession>
<reference key="1">
    <citation type="journal article" date="2004" name="Nature">
        <title>Genome sequence of Silicibacter pomeroyi reveals adaptations to the marine environment.</title>
        <authorList>
            <person name="Moran M.A."/>
            <person name="Buchan A."/>
            <person name="Gonzalez J.M."/>
            <person name="Heidelberg J.F."/>
            <person name="Whitman W.B."/>
            <person name="Kiene R.P."/>
            <person name="Henriksen J.R."/>
            <person name="King G.M."/>
            <person name="Belas R."/>
            <person name="Fuqua C."/>
            <person name="Brinkac L.M."/>
            <person name="Lewis M."/>
            <person name="Johri S."/>
            <person name="Weaver B."/>
            <person name="Pai G."/>
            <person name="Eisen J.A."/>
            <person name="Rahe E."/>
            <person name="Sheldon W.M."/>
            <person name="Ye W."/>
            <person name="Miller T.R."/>
            <person name="Carlton J."/>
            <person name="Rasko D.A."/>
            <person name="Paulsen I.T."/>
            <person name="Ren Q."/>
            <person name="Daugherty S.C."/>
            <person name="DeBoy R.T."/>
            <person name="Dodson R.J."/>
            <person name="Durkin A.S."/>
            <person name="Madupu R."/>
            <person name="Nelson W.C."/>
            <person name="Sullivan S.A."/>
            <person name="Rosovitz M.J."/>
            <person name="Haft D.H."/>
            <person name="Selengut J."/>
            <person name="Ward N."/>
        </authorList>
    </citation>
    <scope>NUCLEOTIDE SEQUENCE [LARGE SCALE GENOMIC DNA]</scope>
    <source>
        <strain>ATCC 700808 / DSM 15171 / DSS-3</strain>
    </source>
</reference>
<reference key="2">
    <citation type="journal article" date="2014" name="Stand. Genomic Sci.">
        <title>An updated genome annotation for the model marine bacterium Ruegeria pomeroyi DSS-3.</title>
        <authorList>
            <person name="Rivers A.R."/>
            <person name="Smith C.B."/>
            <person name="Moran M.A."/>
        </authorList>
    </citation>
    <scope>GENOME REANNOTATION</scope>
    <source>
        <strain>ATCC 700808 / DSM 15171 / DSS-3</strain>
    </source>
</reference>
<organism>
    <name type="scientific">Ruegeria pomeroyi (strain ATCC 700808 / DSM 15171 / DSS-3)</name>
    <name type="common">Silicibacter pomeroyi</name>
    <dbReference type="NCBI Taxonomy" id="246200"/>
    <lineage>
        <taxon>Bacteria</taxon>
        <taxon>Pseudomonadati</taxon>
        <taxon>Pseudomonadota</taxon>
        <taxon>Alphaproteobacteria</taxon>
        <taxon>Rhodobacterales</taxon>
        <taxon>Roseobacteraceae</taxon>
        <taxon>Ruegeria</taxon>
    </lineage>
</organism>
<proteinExistence type="inferred from homology"/>
<dbReference type="EC" id="6.1.1.9" evidence="1"/>
<dbReference type="EMBL" id="CP000031">
    <property type="protein sequence ID" value="AAV96258.1"/>
    <property type="molecule type" value="Genomic_DNA"/>
</dbReference>
<dbReference type="RefSeq" id="WP_011048716.1">
    <property type="nucleotide sequence ID" value="NC_003911.12"/>
</dbReference>
<dbReference type="SMR" id="Q5LP30"/>
<dbReference type="STRING" id="246200.SPO3022"/>
<dbReference type="PaxDb" id="246200-SPO3022"/>
<dbReference type="KEGG" id="sil:SPO3022"/>
<dbReference type="eggNOG" id="COG0525">
    <property type="taxonomic scope" value="Bacteria"/>
</dbReference>
<dbReference type="HOGENOM" id="CLU_001493_0_2_5"/>
<dbReference type="OrthoDB" id="9810365at2"/>
<dbReference type="Proteomes" id="UP000001023">
    <property type="component" value="Chromosome"/>
</dbReference>
<dbReference type="GO" id="GO:0005829">
    <property type="term" value="C:cytosol"/>
    <property type="evidence" value="ECO:0007669"/>
    <property type="project" value="TreeGrafter"/>
</dbReference>
<dbReference type="GO" id="GO:0002161">
    <property type="term" value="F:aminoacyl-tRNA deacylase activity"/>
    <property type="evidence" value="ECO:0007669"/>
    <property type="project" value="InterPro"/>
</dbReference>
<dbReference type="GO" id="GO:0005524">
    <property type="term" value="F:ATP binding"/>
    <property type="evidence" value="ECO:0007669"/>
    <property type="project" value="UniProtKB-UniRule"/>
</dbReference>
<dbReference type="GO" id="GO:0004832">
    <property type="term" value="F:valine-tRNA ligase activity"/>
    <property type="evidence" value="ECO:0007669"/>
    <property type="project" value="UniProtKB-UniRule"/>
</dbReference>
<dbReference type="GO" id="GO:0006438">
    <property type="term" value="P:valyl-tRNA aminoacylation"/>
    <property type="evidence" value="ECO:0007669"/>
    <property type="project" value="UniProtKB-UniRule"/>
</dbReference>
<dbReference type="CDD" id="cd07962">
    <property type="entry name" value="Anticodon_Ia_Val"/>
    <property type="match status" value="1"/>
</dbReference>
<dbReference type="FunFam" id="1.10.287.380:FF:000001">
    <property type="entry name" value="Valine--tRNA ligase"/>
    <property type="match status" value="1"/>
</dbReference>
<dbReference type="FunFam" id="3.40.50.620:FF:000032">
    <property type="entry name" value="Valine--tRNA ligase"/>
    <property type="match status" value="1"/>
</dbReference>
<dbReference type="Gene3D" id="3.40.50.620">
    <property type="entry name" value="HUPs"/>
    <property type="match status" value="2"/>
</dbReference>
<dbReference type="Gene3D" id="1.10.730.10">
    <property type="entry name" value="Isoleucyl-tRNA Synthetase, Domain 1"/>
    <property type="match status" value="1"/>
</dbReference>
<dbReference type="Gene3D" id="1.10.287.380">
    <property type="entry name" value="Valyl-tRNA synthetase, C-terminal domain"/>
    <property type="match status" value="1"/>
</dbReference>
<dbReference type="Gene3D" id="3.90.740.10">
    <property type="entry name" value="Valyl/Leucyl/Isoleucyl-tRNA synthetase, editing domain"/>
    <property type="match status" value="1"/>
</dbReference>
<dbReference type="HAMAP" id="MF_02004">
    <property type="entry name" value="Val_tRNA_synth_type1"/>
    <property type="match status" value="1"/>
</dbReference>
<dbReference type="InterPro" id="IPR001412">
    <property type="entry name" value="aa-tRNA-synth_I_CS"/>
</dbReference>
<dbReference type="InterPro" id="IPR002300">
    <property type="entry name" value="aa-tRNA-synth_Ia"/>
</dbReference>
<dbReference type="InterPro" id="IPR033705">
    <property type="entry name" value="Anticodon_Ia_Val"/>
</dbReference>
<dbReference type="InterPro" id="IPR013155">
    <property type="entry name" value="M/V/L/I-tRNA-synth_anticd-bd"/>
</dbReference>
<dbReference type="InterPro" id="IPR014729">
    <property type="entry name" value="Rossmann-like_a/b/a_fold"/>
</dbReference>
<dbReference type="InterPro" id="IPR010978">
    <property type="entry name" value="tRNA-bd_arm"/>
</dbReference>
<dbReference type="InterPro" id="IPR009080">
    <property type="entry name" value="tRNAsynth_Ia_anticodon-bd"/>
</dbReference>
<dbReference type="InterPro" id="IPR037118">
    <property type="entry name" value="Val-tRNA_synth_C_sf"/>
</dbReference>
<dbReference type="InterPro" id="IPR019499">
    <property type="entry name" value="Val-tRNA_synth_tRNA-bd"/>
</dbReference>
<dbReference type="InterPro" id="IPR009008">
    <property type="entry name" value="Val/Leu/Ile-tRNA-synth_edit"/>
</dbReference>
<dbReference type="InterPro" id="IPR002303">
    <property type="entry name" value="Valyl-tRNA_ligase"/>
</dbReference>
<dbReference type="NCBIfam" id="NF004349">
    <property type="entry name" value="PRK05729.1"/>
    <property type="match status" value="1"/>
</dbReference>
<dbReference type="PANTHER" id="PTHR11946:SF93">
    <property type="entry name" value="VALINE--TRNA LIGASE, CHLOROPLASTIC_MITOCHONDRIAL 2"/>
    <property type="match status" value="1"/>
</dbReference>
<dbReference type="PANTHER" id="PTHR11946">
    <property type="entry name" value="VALYL-TRNA SYNTHETASES"/>
    <property type="match status" value="1"/>
</dbReference>
<dbReference type="Pfam" id="PF08264">
    <property type="entry name" value="Anticodon_1"/>
    <property type="match status" value="1"/>
</dbReference>
<dbReference type="Pfam" id="PF00133">
    <property type="entry name" value="tRNA-synt_1"/>
    <property type="match status" value="1"/>
</dbReference>
<dbReference type="Pfam" id="PF10458">
    <property type="entry name" value="Val_tRNA-synt_C"/>
    <property type="match status" value="1"/>
</dbReference>
<dbReference type="PRINTS" id="PR00986">
    <property type="entry name" value="TRNASYNTHVAL"/>
</dbReference>
<dbReference type="SUPFAM" id="SSF47323">
    <property type="entry name" value="Anticodon-binding domain of a subclass of class I aminoacyl-tRNA synthetases"/>
    <property type="match status" value="1"/>
</dbReference>
<dbReference type="SUPFAM" id="SSF52374">
    <property type="entry name" value="Nucleotidylyl transferase"/>
    <property type="match status" value="1"/>
</dbReference>
<dbReference type="SUPFAM" id="SSF46589">
    <property type="entry name" value="tRNA-binding arm"/>
    <property type="match status" value="1"/>
</dbReference>
<dbReference type="SUPFAM" id="SSF50677">
    <property type="entry name" value="ValRS/IleRS/LeuRS editing domain"/>
    <property type="match status" value="1"/>
</dbReference>
<dbReference type="PROSITE" id="PS00178">
    <property type="entry name" value="AA_TRNA_LIGASE_I"/>
    <property type="match status" value="1"/>
</dbReference>